<gene>
    <name type="ordered locus">YER091C-A</name>
</gene>
<accession>Q02590</accession>
<proteinExistence type="uncertain"/>
<protein>
    <recommendedName>
        <fullName>Putative uncharacterized protein YER091C-A</fullName>
    </recommendedName>
</protein>
<sequence>MWAGKGKKPETGLLSNSFSRERAKGQYFSLESSQSWQLFRSISRSQNCGSHSSFCSIENCECEYGTNAIDALI</sequence>
<dbReference type="EMBL" id="U32508">
    <property type="protein sequence ID" value="AAB60300.1"/>
    <property type="molecule type" value="Genomic_DNA"/>
</dbReference>
<dbReference type="EMBL" id="U18839">
    <property type="status" value="NOT_ANNOTATED_CDS"/>
    <property type="molecule type" value="Genomic_DNA"/>
</dbReference>
<dbReference type="PIR" id="S78719">
    <property type="entry name" value="S78719"/>
</dbReference>
<dbReference type="STRING" id="4932.YER091C-A"/>
<dbReference type="PaxDb" id="4932-YER091C-A"/>
<dbReference type="EnsemblFungi" id="YER091C-A_mRNA">
    <property type="protein sequence ID" value="YER091C-A"/>
    <property type="gene ID" value="YER091C-A"/>
</dbReference>
<dbReference type="AGR" id="SGD:S000007238"/>
<dbReference type="SGD" id="S000007238">
    <property type="gene designation" value="YER091C-A"/>
</dbReference>
<dbReference type="HOGENOM" id="CLU_2706257_0_0_1"/>
<name>YE091_YEAST</name>
<organism>
    <name type="scientific">Saccharomyces cerevisiae (strain ATCC 204508 / S288c)</name>
    <name type="common">Baker's yeast</name>
    <dbReference type="NCBI Taxonomy" id="559292"/>
    <lineage>
        <taxon>Eukaryota</taxon>
        <taxon>Fungi</taxon>
        <taxon>Dikarya</taxon>
        <taxon>Ascomycota</taxon>
        <taxon>Saccharomycotina</taxon>
        <taxon>Saccharomycetes</taxon>
        <taxon>Saccharomycetales</taxon>
        <taxon>Saccharomycetaceae</taxon>
        <taxon>Saccharomyces</taxon>
    </lineage>
</organism>
<evidence type="ECO:0000305" key="1">
    <source>
    </source>
</evidence>
<comment type="caution">
    <text evidence="1">Product of a dubious gene prediction unlikely to encode a functional protein. Because of that it is not part of the S.cerevisiae S288c complete/reference proteome set.</text>
</comment>
<reference key="1">
    <citation type="submission" date="1995-07" db="EMBL/GenBank/DDBJ databases">
        <title>Structure and regulation of MET6, the vitamin B12-independent methionine synthase gene of Saccharomyces cerevisiae.</title>
        <authorList>
            <person name="Korch C."/>
            <person name="Mountain H.A."/>
            <person name="Wenzlau J.M."/>
        </authorList>
    </citation>
    <scope>NUCLEOTIDE SEQUENCE [GENOMIC DNA]</scope>
    <source>
        <strain>S288c / YPH1</strain>
    </source>
</reference>
<reference key="2">
    <citation type="journal article" date="1997" name="Nature">
        <title>The nucleotide sequence of Saccharomyces cerevisiae chromosome V.</title>
        <authorList>
            <person name="Dietrich F.S."/>
            <person name="Mulligan J.T."/>
            <person name="Hennessy K.M."/>
            <person name="Yelton M.A."/>
            <person name="Allen E."/>
            <person name="Araujo R."/>
            <person name="Aviles E."/>
            <person name="Berno A."/>
            <person name="Brennan T."/>
            <person name="Carpenter J."/>
            <person name="Chen E."/>
            <person name="Cherry J.M."/>
            <person name="Chung E."/>
            <person name="Duncan M."/>
            <person name="Guzman E."/>
            <person name="Hartzell G."/>
            <person name="Hunicke-Smith S."/>
            <person name="Hyman R.W."/>
            <person name="Kayser A."/>
            <person name="Komp C."/>
            <person name="Lashkari D."/>
            <person name="Lew H."/>
            <person name="Lin D."/>
            <person name="Mosedale D."/>
            <person name="Nakahara K."/>
            <person name="Namath A."/>
            <person name="Norgren R."/>
            <person name="Oefner P."/>
            <person name="Oh C."/>
            <person name="Petel F.X."/>
            <person name="Roberts D."/>
            <person name="Sehl P."/>
            <person name="Schramm S."/>
            <person name="Shogren T."/>
            <person name="Smith V."/>
            <person name="Taylor P."/>
            <person name="Wei Y."/>
            <person name="Botstein D."/>
            <person name="Davis R.W."/>
        </authorList>
    </citation>
    <scope>NUCLEOTIDE SEQUENCE [LARGE SCALE GENOMIC DNA]</scope>
    <source>
        <strain>ATCC 204508 / S288c</strain>
    </source>
</reference>
<reference key="3">
    <citation type="journal article" date="2014" name="G3 (Bethesda)">
        <title>The reference genome sequence of Saccharomyces cerevisiae: Then and now.</title>
        <authorList>
            <person name="Engel S.R."/>
            <person name="Dietrich F.S."/>
            <person name="Fisk D.G."/>
            <person name="Binkley G."/>
            <person name="Balakrishnan R."/>
            <person name="Costanzo M.C."/>
            <person name="Dwight S.S."/>
            <person name="Hitz B.C."/>
            <person name="Karra K."/>
            <person name="Nash R.S."/>
            <person name="Weng S."/>
            <person name="Wong E.D."/>
            <person name="Lloyd P."/>
            <person name="Skrzypek M.S."/>
            <person name="Miyasato S.R."/>
            <person name="Simison M."/>
            <person name="Cherry J.M."/>
        </authorList>
    </citation>
    <scope>GENOME REANNOTATION</scope>
    <source>
        <strain>ATCC 204508 / S288c</strain>
    </source>
</reference>
<feature type="chain" id="PRO_0000299913" description="Putative uncharacterized protein YER091C-A">
    <location>
        <begin position="1"/>
        <end position="73"/>
    </location>
</feature>